<comment type="similarity">
    <text evidence="1">Belongs to the universal ribosomal protein uS9 family.</text>
</comment>
<feature type="chain" id="PRO_0000111498" description="Small ribosomal subunit protein uS9">
    <location>
        <begin position="1"/>
        <end position="142"/>
    </location>
</feature>
<gene>
    <name type="primary">RPS16</name>
    <name type="ordered locus">DEHA2D08558g</name>
</gene>
<accession>Q6BSI7</accession>
<dbReference type="EMBL" id="CR382136">
    <property type="protein sequence ID" value="CAG86979.1"/>
    <property type="molecule type" value="Genomic_DNA"/>
</dbReference>
<dbReference type="RefSeq" id="XP_458833.1">
    <property type="nucleotide sequence ID" value="XM_458833.1"/>
</dbReference>
<dbReference type="SMR" id="Q6BSI7"/>
<dbReference type="FunCoup" id="Q6BSI7">
    <property type="interactions" value="850"/>
</dbReference>
<dbReference type="STRING" id="284592.Q6BSI7"/>
<dbReference type="GeneID" id="2901476"/>
<dbReference type="KEGG" id="dha:DEHA2D08558g"/>
<dbReference type="VEuPathDB" id="FungiDB:DEHA2D08558g"/>
<dbReference type="eggNOG" id="KOG1753">
    <property type="taxonomic scope" value="Eukaryota"/>
</dbReference>
<dbReference type="HOGENOM" id="CLU_046483_4_0_1"/>
<dbReference type="InParanoid" id="Q6BSI7"/>
<dbReference type="OMA" id="WPIEMAR"/>
<dbReference type="OrthoDB" id="426865at2759"/>
<dbReference type="Proteomes" id="UP000000599">
    <property type="component" value="Chromosome D"/>
</dbReference>
<dbReference type="GO" id="GO:0022627">
    <property type="term" value="C:cytosolic small ribosomal subunit"/>
    <property type="evidence" value="ECO:0007669"/>
    <property type="project" value="TreeGrafter"/>
</dbReference>
<dbReference type="GO" id="GO:0003723">
    <property type="term" value="F:RNA binding"/>
    <property type="evidence" value="ECO:0007669"/>
    <property type="project" value="TreeGrafter"/>
</dbReference>
<dbReference type="GO" id="GO:0003735">
    <property type="term" value="F:structural constituent of ribosome"/>
    <property type="evidence" value="ECO:0007669"/>
    <property type="project" value="InterPro"/>
</dbReference>
<dbReference type="GO" id="GO:0000462">
    <property type="term" value="P:maturation of SSU-rRNA from tricistronic rRNA transcript (SSU-rRNA, 5.8S rRNA, LSU-rRNA)"/>
    <property type="evidence" value="ECO:0007669"/>
    <property type="project" value="TreeGrafter"/>
</dbReference>
<dbReference type="GO" id="GO:0006412">
    <property type="term" value="P:translation"/>
    <property type="evidence" value="ECO:0007669"/>
    <property type="project" value="InterPro"/>
</dbReference>
<dbReference type="FunFam" id="3.30.230.10:FF:000007">
    <property type="entry name" value="40S ribosomal protein S16"/>
    <property type="match status" value="1"/>
</dbReference>
<dbReference type="Gene3D" id="3.30.230.10">
    <property type="match status" value="1"/>
</dbReference>
<dbReference type="InterPro" id="IPR020568">
    <property type="entry name" value="Ribosomal_Su5_D2-typ_SF"/>
</dbReference>
<dbReference type="InterPro" id="IPR000754">
    <property type="entry name" value="Ribosomal_uS9"/>
</dbReference>
<dbReference type="InterPro" id="IPR020574">
    <property type="entry name" value="Ribosomal_uS9_CS"/>
</dbReference>
<dbReference type="InterPro" id="IPR014721">
    <property type="entry name" value="Ribsml_uS5_D2-typ_fold_subgr"/>
</dbReference>
<dbReference type="NCBIfam" id="NF001749">
    <property type="entry name" value="PRK00474.1"/>
    <property type="match status" value="1"/>
</dbReference>
<dbReference type="PANTHER" id="PTHR21569:SF16">
    <property type="entry name" value="RIBOSOMAL PROTEIN S16"/>
    <property type="match status" value="1"/>
</dbReference>
<dbReference type="PANTHER" id="PTHR21569">
    <property type="entry name" value="RIBOSOMAL PROTEIN S9"/>
    <property type="match status" value="1"/>
</dbReference>
<dbReference type="Pfam" id="PF00380">
    <property type="entry name" value="Ribosomal_S9"/>
    <property type="match status" value="1"/>
</dbReference>
<dbReference type="SUPFAM" id="SSF54211">
    <property type="entry name" value="Ribosomal protein S5 domain 2-like"/>
    <property type="match status" value="1"/>
</dbReference>
<dbReference type="PROSITE" id="PS00360">
    <property type="entry name" value="RIBOSOMAL_S9"/>
    <property type="match status" value="1"/>
</dbReference>
<keyword id="KW-1185">Reference proteome</keyword>
<keyword id="KW-0687">Ribonucleoprotein</keyword>
<keyword id="KW-0689">Ribosomal protein</keyword>
<organism>
    <name type="scientific">Debaryomyces hansenii (strain ATCC 36239 / CBS 767 / BCRC 21394 / JCM 1990 / NBRC 0083 / IGC 2968)</name>
    <name type="common">Yeast</name>
    <name type="synonym">Torulaspora hansenii</name>
    <dbReference type="NCBI Taxonomy" id="284592"/>
    <lineage>
        <taxon>Eukaryota</taxon>
        <taxon>Fungi</taxon>
        <taxon>Dikarya</taxon>
        <taxon>Ascomycota</taxon>
        <taxon>Saccharomycotina</taxon>
        <taxon>Pichiomycetes</taxon>
        <taxon>Debaryomycetaceae</taxon>
        <taxon>Debaryomyces</taxon>
    </lineage>
</organism>
<sequence>MSTPSVQTFGKKKTATAVAHVKAGKGLIKVNGAPITLVQPEILRFKVYEPLTLVGLDKFQNIDIRVKVSGGGHVSQVYAIRQAIAKGLVAYHQKFVDEASKNELKKVFASYDKTLLVADSRRMEPKKFGGRGARARFQKSYR</sequence>
<reference key="1">
    <citation type="journal article" date="2004" name="Nature">
        <title>Genome evolution in yeasts.</title>
        <authorList>
            <person name="Dujon B."/>
            <person name="Sherman D."/>
            <person name="Fischer G."/>
            <person name="Durrens P."/>
            <person name="Casaregola S."/>
            <person name="Lafontaine I."/>
            <person name="de Montigny J."/>
            <person name="Marck C."/>
            <person name="Neuveglise C."/>
            <person name="Talla E."/>
            <person name="Goffard N."/>
            <person name="Frangeul L."/>
            <person name="Aigle M."/>
            <person name="Anthouard V."/>
            <person name="Babour A."/>
            <person name="Barbe V."/>
            <person name="Barnay S."/>
            <person name="Blanchin S."/>
            <person name="Beckerich J.-M."/>
            <person name="Beyne E."/>
            <person name="Bleykasten C."/>
            <person name="Boisrame A."/>
            <person name="Boyer J."/>
            <person name="Cattolico L."/>
            <person name="Confanioleri F."/>
            <person name="de Daruvar A."/>
            <person name="Despons L."/>
            <person name="Fabre E."/>
            <person name="Fairhead C."/>
            <person name="Ferry-Dumazet H."/>
            <person name="Groppi A."/>
            <person name="Hantraye F."/>
            <person name="Hennequin C."/>
            <person name="Jauniaux N."/>
            <person name="Joyet P."/>
            <person name="Kachouri R."/>
            <person name="Kerrest A."/>
            <person name="Koszul R."/>
            <person name="Lemaire M."/>
            <person name="Lesur I."/>
            <person name="Ma L."/>
            <person name="Muller H."/>
            <person name="Nicaud J.-M."/>
            <person name="Nikolski M."/>
            <person name="Oztas S."/>
            <person name="Ozier-Kalogeropoulos O."/>
            <person name="Pellenz S."/>
            <person name="Potier S."/>
            <person name="Richard G.-F."/>
            <person name="Straub M.-L."/>
            <person name="Suleau A."/>
            <person name="Swennen D."/>
            <person name="Tekaia F."/>
            <person name="Wesolowski-Louvel M."/>
            <person name="Westhof E."/>
            <person name="Wirth B."/>
            <person name="Zeniou-Meyer M."/>
            <person name="Zivanovic Y."/>
            <person name="Bolotin-Fukuhara M."/>
            <person name="Thierry A."/>
            <person name="Bouchier C."/>
            <person name="Caudron B."/>
            <person name="Scarpelli C."/>
            <person name="Gaillardin C."/>
            <person name="Weissenbach J."/>
            <person name="Wincker P."/>
            <person name="Souciet J.-L."/>
        </authorList>
    </citation>
    <scope>NUCLEOTIDE SEQUENCE [LARGE SCALE GENOMIC DNA]</scope>
    <source>
        <strain>ATCC 36239 / CBS 767 / BCRC 21394 / JCM 1990 / NBRC 0083 / IGC 2968</strain>
    </source>
</reference>
<name>RS16_DEBHA</name>
<protein>
    <recommendedName>
        <fullName evidence="1">Small ribosomal subunit protein uS9</fullName>
    </recommendedName>
    <alternativeName>
        <fullName>40S ribosomal protein S16</fullName>
    </alternativeName>
</protein>
<proteinExistence type="inferred from homology"/>
<evidence type="ECO:0000305" key="1"/>